<evidence type="ECO:0000255" key="1">
    <source>
        <dbReference type="PROSITE-ProRule" id="PRU00465"/>
    </source>
</evidence>
<evidence type="ECO:0000256" key="2">
    <source>
        <dbReference type="SAM" id="MobiDB-lite"/>
    </source>
</evidence>
<evidence type="ECO:0000269" key="3">
    <source>
    </source>
</evidence>
<evidence type="ECO:0000303" key="4">
    <source>
    </source>
</evidence>
<evidence type="ECO:0000305" key="5"/>
<evidence type="ECO:0000305" key="6">
    <source>
    </source>
</evidence>
<evidence type="ECO:0000312" key="7">
    <source>
        <dbReference type="EMBL" id="KKB43346.1"/>
    </source>
</evidence>
<sequence length="122" mass="13351">MSHDRRLTVGSLLPNQPRPVAVPKAPSVVQPSKQPLPEKAIIRLEQNGRSFSVRHVKGNLLTEGLSQGLPLQYKCRKGTCGVCTVKVTDGASRLSLPNQQEHKKLQGNIKSGFRLACQANME</sequence>
<feature type="chain" id="PRO_0000455330" description="Ferredoxin">
    <location>
        <begin position="1"/>
        <end position="122"/>
    </location>
</feature>
<feature type="domain" description="2Fe-2S ferredoxin-type" evidence="1">
    <location>
        <begin position="40"/>
        <end position="122"/>
    </location>
</feature>
<feature type="region of interest" description="Disordered" evidence="2">
    <location>
        <begin position="1"/>
        <end position="33"/>
    </location>
</feature>
<feature type="region of interest" description="Targeting peptide" evidence="6">
    <location>
        <begin position="8"/>
        <end position="14"/>
    </location>
</feature>
<feature type="binding site" evidence="1">
    <location>
        <position position="75"/>
    </location>
    <ligand>
        <name>[2Fe-2S] cluster</name>
        <dbReference type="ChEBI" id="CHEBI:190135"/>
    </ligand>
</feature>
<feature type="binding site" evidence="1">
    <location>
        <position position="80"/>
    </location>
    <ligand>
        <name>[2Fe-2S] cluster</name>
        <dbReference type="ChEBI" id="CHEBI:190135"/>
    </ligand>
</feature>
<feature type="binding site" evidence="1">
    <location>
        <position position="83"/>
    </location>
    <ligand>
        <name>[2Fe-2S] cluster</name>
        <dbReference type="ChEBI" id="CHEBI:190135"/>
    </ligand>
</feature>
<feature type="binding site" evidence="1">
    <location>
        <position position="117"/>
    </location>
    <ligand>
        <name>[2Fe-2S] cluster</name>
        <dbReference type="ChEBI" id="CHEBI:190135"/>
    </ligand>
</feature>
<comment type="function">
    <text evidence="3">Cargo protein of a type 1 encapsulin nanocompartment. An iron-binding protein probably involved in iron mineralization in the encapsulin nanocompartment. 2 different cargo proteins have been identified (IMEF and Fer); when both are expressed in E.coli with the shell protein only IMEF is detected within the nanocompartment. E.coli expressing all 3 genes stores the largest amount of iron and is protected from Fe/H2O2-induced oxidative stress.</text>
</comment>
<comment type="cofactor">
    <cofactor evidence="1">
        <name>[2Fe-2S] cluster</name>
        <dbReference type="ChEBI" id="CHEBI:190135"/>
    </cofactor>
    <text evidence="1">Binds 1 2Fe-2S cluster.</text>
</comment>
<comment type="subcellular location">
    <subcellularLocation>
        <location evidence="3">Encapsulin nanocompartment</location>
    </subcellularLocation>
</comment>
<comment type="domain">
    <text evidence="6">The N-terminus (targeting peptide) is probably responsible for targeting to the encapsulin nanocompartment.</text>
</comment>
<comment type="similarity">
    <text evidence="5">Belongs to the 2Fe2S plant-type ferredoxin family.</text>
</comment>
<gene>
    <name evidence="4" type="primary">fer</name>
    <name evidence="7" type="ORF">QY95_01591</name>
</gene>
<dbReference type="EMBL" id="JWIR02000003">
    <property type="protein sequence ID" value="KKB43346.1"/>
    <property type="molecule type" value="Genomic_DNA"/>
</dbReference>
<dbReference type="RefSeq" id="WP_052717249.1">
    <property type="nucleotide sequence ID" value="NZ_JWIQ02000107.1"/>
</dbReference>
<dbReference type="SMR" id="A0A0F5HNC1"/>
<dbReference type="STRING" id="1221996.QY95_01591"/>
<dbReference type="OrthoDB" id="9807864at2"/>
<dbReference type="Proteomes" id="UP000031563">
    <property type="component" value="Unassembled WGS sequence"/>
</dbReference>
<dbReference type="GO" id="GO:0140737">
    <property type="term" value="C:encapsulin nanocompartment"/>
    <property type="evidence" value="ECO:0000314"/>
    <property type="project" value="UniProtKB"/>
</dbReference>
<dbReference type="GO" id="GO:0051537">
    <property type="term" value="F:2 iron, 2 sulfur cluster binding"/>
    <property type="evidence" value="ECO:0007669"/>
    <property type="project" value="UniProtKB-KW"/>
</dbReference>
<dbReference type="GO" id="GO:0046872">
    <property type="term" value="F:metal ion binding"/>
    <property type="evidence" value="ECO:0007669"/>
    <property type="project" value="UniProtKB-KW"/>
</dbReference>
<dbReference type="GO" id="GO:0006879">
    <property type="term" value="P:intracellular iron ion homeostasis"/>
    <property type="evidence" value="ECO:0007669"/>
    <property type="project" value="UniProtKB-KW"/>
</dbReference>
<dbReference type="CDD" id="cd00207">
    <property type="entry name" value="fer2"/>
    <property type="match status" value="1"/>
</dbReference>
<dbReference type="Gene3D" id="3.10.20.30">
    <property type="match status" value="1"/>
</dbReference>
<dbReference type="InterPro" id="IPR036010">
    <property type="entry name" value="2Fe-2S_ferredoxin-like_sf"/>
</dbReference>
<dbReference type="InterPro" id="IPR001041">
    <property type="entry name" value="2Fe-2S_ferredoxin-type"/>
</dbReference>
<dbReference type="InterPro" id="IPR006058">
    <property type="entry name" value="2Fe2S_fd_BS"/>
</dbReference>
<dbReference type="InterPro" id="IPR012675">
    <property type="entry name" value="Beta-grasp_dom_sf"/>
</dbReference>
<dbReference type="Pfam" id="PF00111">
    <property type="entry name" value="Fer2"/>
    <property type="match status" value="1"/>
</dbReference>
<dbReference type="SUPFAM" id="SSF54292">
    <property type="entry name" value="2Fe-2S ferredoxin-like"/>
    <property type="match status" value="1"/>
</dbReference>
<dbReference type="PROSITE" id="PS00197">
    <property type="entry name" value="2FE2S_FER_1"/>
    <property type="match status" value="1"/>
</dbReference>
<dbReference type="PROSITE" id="PS51085">
    <property type="entry name" value="2FE2S_FER_2"/>
    <property type="match status" value="1"/>
</dbReference>
<protein>
    <recommendedName>
        <fullName evidence="4">Ferredoxin</fullName>
    </recommendedName>
    <alternativeName>
        <fullName evidence="4">Fer cargo protein</fullName>
    </alternativeName>
</protein>
<accession>A0A0F5HNC1</accession>
<accession>A0A0F5ICV7</accession>
<keyword id="KW-0001">2Fe-2S</keyword>
<keyword id="KW-1284">Encapsulin nanocompartment</keyword>
<keyword id="KW-0408">Iron</keyword>
<keyword id="KW-0409">Iron storage</keyword>
<keyword id="KW-0411">Iron-sulfur</keyword>
<keyword id="KW-0479">Metal-binding</keyword>
<keyword id="KW-1185">Reference proteome</keyword>
<reference key="1">
    <citation type="journal article" date="2017" name="Syst. Appl. Microbiol.">
        <title>Examination into the taxonomic position of Bacillus thermotolerans Yang et al., 2013, proposal for its reclassification into a new genus and species Quasibacillus thermotolerans gen. nov., comb. nov. and reclassification of B. encimensis Dastager et al., 2015 as a later heterotypic synonym of B. badius.</title>
        <authorList>
            <person name="Verma A."/>
            <person name="Pal Y."/>
            <person name="Khatri I."/>
            <person name="Ojha A.K."/>
            <person name="Gruber-Vodicka H."/>
            <person name="Schumann P."/>
            <person name="Dastager S."/>
            <person name="Subramanian S."/>
            <person name="Mayilraj S."/>
            <person name="Krishnamurthi S."/>
        </authorList>
    </citation>
    <scope>NUCLEOTIDE SEQUENCE [LARGE SCALE GENOMIC DNA]</scope>
    <source>
        <strain>MTCC 10057 / 5.5LF 38TD</strain>
        <strain>MTCC 8252</strain>
    </source>
</reference>
<reference key="2">
    <citation type="journal article" date="2017" name="Nat. Microbiol.">
        <title>Widespread distribution of encapsulin nanocompartments reveals functional diversity.</title>
        <authorList>
            <person name="Giessen T.W."/>
            <person name="Silver P.A."/>
        </authorList>
    </citation>
    <scope>FUNCTION</scope>
    <scope>SUBCELLULAR LOCATION</scope>
    <scope>DOMAIN</scope>
    <source>
        <strain>MTCC 10057 / 5.5LF 38TD</strain>
    </source>
</reference>
<name>FER_BACTR</name>
<proteinExistence type="inferred from homology"/>
<organism>
    <name type="scientific">Bacillus thermotolerans</name>
    <name type="common">Quasibacillus thermotolerans</name>
    <dbReference type="NCBI Taxonomy" id="1221996"/>
    <lineage>
        <taxon>Bacteria</taxon>
        <taxon>Bacillati</taxon>
        <taxon>Bacillota</taxon>
        <taxon>Bacilli</taxon>
        <taxon>Bacillales</taxon>
        <taxon>Bacillaceae</taxon>
        <taxon>Bacillus</taxon>
    </lineage>
</organism>